<comment type="function">
    <text evidence="1">Cell wall formation.</text>
</comment>
<comment type="catalytic activity">
    <reaction evidence="1">
        <text>UDP-N-acetyl-alpha-D-muramate + L-alanine + ATP = UDP-N-acetyl-alpha-D-muramoyl-L-alanine + ADP + phosphate + H(+)</text>
        <dbReference type="Rhea" id="RHEA:23372"/>
        <dbReference type="ChEBI" id="CHEBI:15378"/>
        <dbReference type="ChEBI" id="CHEBI:30616"/>
        <dbReference type="ChEBI" id="CHEBI:43474"/>
        <dbReference type="ChEBI" id="CHEBI:57972"/>
        <dbReference type="ChEBI" id="CHEBI:70757"/>
        <dbReference type="ChEBI" id="CHEBI:83898"/>
        <dbReference type="ChEBI" id="CHEBI:456216"/>
        <dbReference type="EC" id="6.3.2.8"/>
    </reaction>
</comment>
<comment type="pathway">
    <text evidence="1">Cell wall biogenesis; peptidoglycan biosynthesis.</text>
</comment>
<comment type="subcellular location">
    <subcellularLocation>
        <location evidence="1">Cytoplasm</location>
    </subcellularLocation>
</comment>
<comment type="similarity">
    <text evidence="1">Belongs to the MurCDEF family.</text>
</comment>
<name>MURC_AQUAE</name>
<reference key="1">
    <citation type="journal article" date="1998" name="Nature">
        <title>The complete genome of the hyperthermophilic bacterium Aquifex aeolicus.</title>
        <authorList>
            <person name="Deckert G."/>
            <person name="Warren P.V."/>
            <person name="Gaasterland T."/>
            <person name="Young W.G."/>
            <person name="Lenox A.L."/>
            <person name="Graham D.E."/>
            <person name="Overbeek R."/>
            <person name="Snead M.A."/>
            <person name="Keller M."/>
            <person name="Aujay M."/>
            <person name="Huber R."/>
            <person name="Feldman R.A."/>
            <person name="Short J.M."/>
            <person name="Olsen G.J."/>
            <person name="Swanson R.V."/>
        </authorList>
    </citation>
    <scope>NUCLEOTIDE SEQUENCE [LARGE SCALE GENOMIC DNA]</scope>
    <source>
        <strain>VF5</strain>
    </source>
</reference>
<accession>O67373</accession>
<feature type="chain" id="PRO_0000182046" description="UDP-N-acetylmuramate--L-alanine ligase">
    <location>
        <begin position="1"/>
        <end position="454"/>
    </location>
</feature>
<feature type="binding site" evidence="1">
    <location>
        <begin position="113"/>
        <end position="119"/>
    </location>
    <ligand>
        <name>ATP</name>
        <dbReference type="ChEBI" id="CHEBI:30616"/>
    </ligand>
</feature>
<gene>
    <name evidence="1" type="primary">murC</name>
    <name type="ordered locus">aq_1360</name>
</gene>
<organism>
    <name type="scientific">Aquifex aeolicus (strain VF5)</name>
    <dbReference type="NCBI Taxonomy" id="224324"/>
    <lineage>
        <taxon>Bacteria</taxon>
        <taxon>Pseudomonadati</taxon>
        <taxon>Aquificota</taxon>
        <taxon>Aquificia</taxon>
        <taxon>Aquificales</taxon>
        <taxon>Aquificaceae</taxon>
        <taxon>Aquifex</taxon>
    </lineage>
</organism>
<keyword id="KW-0067">ATP-binding</keyword>
<keyword id="KW-0131">Cell cycle</keyword>
<keyword id="KW-0132">Cell division</keyword>
<keyword id="KW-0133">Cell shape</keyword>
<keyword id="KW-0961">Cell wall biogenesis/degradation</keyword>
<keyword id="KW-0963">Cytoplasm</keyword>
<keyword id="KW-0436">Ligase</keyword>
<keyword id="KW-0547">Nucleotide-binding</keyword>
<keyword id="KW-0573">Peptidoglycan synthesis</keyword>
<keyword id="KW-1185">Reference proteome</keyword>
<proteinExistence type="inferred from homology"/>
<protein>
    <recommendedName>
        <fullName evidence="1">UDP-N-acetylmuramate--L-alanine ligase</fullName>
        <ecNumber evidence="1">6.3.2.8</ecNumber>
    </recommendedName>
    <alternativeName>
        <fullName evidence="1">UDP-N-acetylmuramoyl-L-alanine synthetase</fullName>
    </alternativeName>
</protein>
<evidence type="ECO:0000255" key="1">
    <source>
        <dbReference type="HAMAP-Rule" id="MF_00046"/>
    </source>
</evidence>
<dbReference type="EC" id="6.3.2.8" evidence="1"/>
<dbReference type="EMBL" id="AE000657">
    <property type="protein sequence ID" value="AAC07323.1"/>
    <property type="molecule type" value="Genomic_DNA"/>
</dbReference>
<dbReference type="PIR" id="B70418">
    <property type="entry name" value="B70418"/>
</dbReference>
<dbReference type="RefSeq" id="NP_213937.1">
    <property type="nucleotide sequence ID" value="NC_000918.1"/>
</dbReference>
<dbReference type="SMR" id="O67373"/>
<dbReference type="FunCoup" id="O67373">
    <property type="interactions" value="272"/>
</dbReference>
<dbReference type="STRING" id="224324.aq_1360"/>
<dbReference type="EnsemblBacteria" id="AAC07323">
    <property type="protein sequence ID" value="AAC07323"/>
    <property type="gene ID" value="aq_1360"/>
</dbReference>
<dbReference type="KEGG" id="aae:aq_1360"/>
<dbReference type="PATRIC" id="fig|224324.8.peg.1064"/>
<dbReference type="eggNOG" id="COG0773">
    <property type="taxonomic scope" value="Bacteria"/>
</dbReference>
<dbReference type="HOGENOM" id="CLU_028104_2_2_0"/>
<dbReference type="InParanoid" id="O67373"/>
<dbReference type="OrthoDB" id="9804126at2"/>
<dbReference type="UniPathway" id="UPA00219"/>
<dbReference type="Proteomes" id="UP000000798">
    <property type="component" value="Chromosome"/>
</dbReference>
<dbReference type="GO" id="GO:0005737">
    <property type="term" value="C:cytoplasm"/>
    <property type="evidence" value="ECO:0007669"/>
    <property type="project" value="UniProtKB-SubCell"/>
</dbReference>
<dbReference type="GO" id="GO:0005524">
    <property type="term" value="F:ATP binding"/>
    <property type="evidence" value="ECO:0007669"/>
    <property type="project" value="UniProtKB-UniRule"/>
</dbReference>
<dbReference type="GO" id="GO:0008763">
    <property type="term" value="F:UDP-N-acetylmuramate-L-alanine ligase activity"/>
    <property type="evidence" value="ECO:0007669"/>
    <property type="project" value="UniProtKB-UniRule"/>
</dbReference>
<dbReference type="GO" id="GO:0051301">
    <property type="term" value="P:cell division"/>
    <property type="evidence" value="ECO:0007669"/>
    <property type="project" value="UniProtKB-KW"/>
</dbReference>
<dbReference type="GO" id="GO:0071555">
    <property type="term" value="P:cell wall organization"/>
    <property type="evidence" value="ECO:0007669"/>
    <property type="project" value="UniProtKB-KW"/>
</dbReference>
<dbReference type="GO" id="GO:0009252">
    <property type="term" value="P:peptidoglycan biosynthetic process"/>
    <property type="evidence" value="ECO:0007669"/>
    <property type="project" value="UniProtKB-UniRule"/>
</dbReference>
<dbReference type="GO" id="GO:0008360">
    <property type="term" value="P:regulation of cell shape"/>
    <property type="evidence" value="ECO:0007669"/>
    <property type="project" value="UniProtKB-KW"/>
</dbReference>
<dbReference type="Gene3D" id="3.90.190.20">
    <property type="entry name" value="Mur ligase, C-terminal domain"/>
    <property type="match status" value="1"/>
</dbReference>
<dbReference type="Gene3D" id="3.40.1190.10">
    <property type="entry name" value="Mur-like, catalytic domain"/>
    <property type="match status" value="1"/>
</dbReference>
<dbReference type="Gene3D" id="3.40.50.720">
    <property type="entry name" value="NAD(P)-binding Rossmann-like Domain"/>
    <property type="match status" value="1"/>
</dbReference>
<dbReference type="HAMAP" id="MF_00046">
    <property type="entry name" value="MurC"/>
    <property type="match status" value="1"/>
</dbReference>
<dbReference type="InterPro" id="IPR036565">
    <property type="entry name" value="Mur-like_cat_sf"/>
</dbReference>
<dbReference type="InterPro" id="IPR004101">
    <property type="entry name" value="Mur_ligase_C"/>
</dbReference>
<dbReference type="InterPro" id="IPR036615">
    <property type="entry name" value="Mur_ligase_C_dom_sf"/>
</dbReference>
<dbReference type="InterPro" id="IPR013221">
    <property type="entry name" value="Mur_ligase_cen"/>
</dbReference>
<dbReference type="InterPro" id="IPR000713">
    <property type="entry name" value="Mur_ligase_N"/>
</dbReference>
<dbReference type="InterPro" id="IPR050061">
    <property type="entry name" value="MurCDEF_pg_biosynth"/>
</dbReference>
<dbReference type="InterPro" id="IPR005758">
    <property type="entry name" value="UDP-N-AcMur_Ala_ligase_MurC"/>
</dbReference>
<dbReference type="NCBIfam" id="TIGR01082">
    <property type="entry name" value="murC"/>
    <property type="match status" value="1"/>
</dbReference>
<dbReference type="PANTHER" id="PTHR43445:SF3">
    <property type="entry name" value="UDP-N-ACETYLMURAMATE--L-ALANINE LIGASE"/>
    <property type="match status" value="1"/>
</dbReference>
<dbReference type="PANTHER" id="PTHR43445">
    <property type="entry name" value="UDP-N-ACETYLMURAMATE--L-ALANINE LIGASE-RELATED"/>
    <property type="match status" value="1"/>
</dbReference>
<dbReference type="Pfam" id="PF01225">
    <property type="entry name" value="Mur_ligase"/>
    <property type="match status" value="1"/>
</dbReference>
<dbReference type="Pfam" id="PF02875">
    <property type="entry name" value="Mur_ligase_C"/>
    <property type="match status" value="1"/>
</dbReference>
<dbReference type="Pfam" id="PF08245">
    <property type="entry name" value="Mur_ligase_M"/>
    <property type="match status" value="1"/>
</dbReference>
<dbReference type="SUPFAM" id="SSF51984">
    <property type="entry name" value="MurCD N-terminal domain"/>
    <property type="match status" value="1"/>
</dbReference>
<dbReference type="SUPFAM" id="SSF53623">
    <property type="entry name" value="MurD-like peptide ligases, catalytic domain"/>
    <property type="match status" value="1"/>
</dbReference>
<dbReference type="SUPFAM" id="SSF53244">
    <property type="entry name" value="MurD-like peptide ligases, peptide-binding domain"/>
    <property type="match status" value="1"/>
</dbReference>
<sequence>MLRERIKKFHFIGIGGIGMSGIAQILLEMGYKVSGSDISENKNTKLLKQKGAKIYIGHRPENLGDAQVVVYSSAVKPDNPEIQEAKRRNIPVIPRGEMLAELFKLKEGIAVSGSHGKTTTTSMIAEILINAGLEPTVIIGGRLKRLGTNAKLGRGELLVSEADESDGSFLKLQPAVAVITNVDKEHLDFYENFERVKEAFEQFMNSVPFYGFAVVNLDDPTLAQLVKKSHERVITYGINSPALVRAKNLYLKEGRYEFGVEFKGKELGRIHLGIAGIHNVYNALAATGVALELGVSFEVIKKSLEEFRNAERRLELKGYYKNSPVYDDYGHHPTEIKAVINSLRDMYPDKNLLVVFQPHRYSRTYYLFEDFVKVLKDIDKLIVTDIYPASENNVYGVSAEELARKSGAVFAKDKEEVFEKVREVHDEGDVILFLGAGSISKWCEEFLKEVNLEK</sequence>